<protein>
    <recommendedName>
        <fullName evidence="1">D-aminoacyl-tRNA deacylase</fullName>
        <shortName evidence="1">DTD</shortName>
        <ecNumber evidence="1">3.1.1.96</ecNumber>
    </recommendedName>
    <alternativeName>
        <fullName evidence="1">Gly-tRNA(Ala) deacylase</fullName>
    </alternativeName>
</protein>
<feature type="chain" id="PRO_1000050814" description="D-aminoacyl-tRNA deacylase">
    <location>
        <begin position="1"/>
        <end position="159"/>
    </location>
</feature>
<feature type="short sequence motif" description="Gly-cisPro motif, important for rejection of L-amino acids" evidence="1">
    <location>
        <begin position="146"/>
        <end position="147"/>
    </location>
</feature>
<name>DTD_BIFAA</name>
<organism>
    <name type="scientific">Bifidobacterium adolescentis (strain ATCC 15703 / DSM 20083 / NCTC 11814 / E194a)</name>
    <dbReference type="NCBI Taxonomy" id="367928"/>
    <lineage>
        <taxon>Bacteria</taxon>
        <taxon>Bacillati</taxon>
        <taxon>Actinomycetota</taxon>
        <taxon>Actinomycetes</taxon>
        <taxon>Bifidobacteriales</taxon>
        <taxon>Bifidobacteriaceae</taxon>
        <taxon>Bifidobacterium</taxon>
    </lineage>
</organism>
<proteinExistence type="inferred from homology"/>
<sequence length="159" mass="17476">MRIVLQKVSEGSVDVVDETSGEVDTTFEPQHIGIGYVLLVGVEDTDGAKQIDWLAHKIANLRVFEDENGKMNRSIHDVDGSVLSISQFTLYADVRKGNRPSFVKAGAPDHAEQVWHAFNDALRAQGLDVKEGRFGAHMRVSLTNDGPVTIIFDTDELGI</sequence>
<evidence type="ECO:0000255" key="1">
    <source>
        <dbReference type="HAMAP-Rule" id="MF_00518"/>
    </source>
</evidence>
<gene>
    <name evidence="1" type="primary">dtd</name>
    <name type="ordered locus">BAD_0968</name>
</gene>
<accession>A1A216</accession>
<comment type="function">
    <text evidence="1">An aminoacyl-tRNA editing enzyme that deacylates mischarged D-aminoacyl-tRNAs. Also deacylates mischarged glycyl-tRNA(Ala), protecting cells against glycine mischarging by AlaRS. Acts via tRNA-based rather than protein-based catalysis; rejects L-amino acids rather than detecting D-amino acids in the active site. By recycling D-aminoacyl-tRNA to D-amino acids and free tRNA molecules, this enzyme counteracts the toxicity associated with the formation of D-aminoacyl-tRNA entities in vivo and helps enforce protein L-homochirality.</text>
</comment>
<comment type="catalytic activity">
    <reaction evidence="1">
        <text>glycyl-tRNA(Ala) + H2O = tRNA(Ala) + glycine + H(+)</text>
        <dbReference type="Rhea" id="RHEA:53744"/>
        <dbReference type="Rhea" id="RHEA-COMP:9657"/>
        <dbReference type="Rhea" id="RHEA-COMP:13640"/>
        <dbReference type="ChEBI" id="CHEBI:15377"/>
        <dbReference type="ChEBI" id="CHEBI:15378"/>
        <dbReference type="ChEBI" id="CHEBI:57305"/>
        <dbReference type="ChEBI" id="CHEBI:78442"/>
        <dbReference type="ChEBI" id="CHEBI:78522"/>
        <dbReference type="EC" id="3.1.1.96"/>
    </reaction>
</comment>
<comment type="catalytic activity">
    <reaction evidence="1">
        <text>a D-aminoacyl-tRNA + H2O = a tRNA + a D-alpha-amino acid + H(+)</text>
        <dbReference type="Rhea" id="RHEA:13953"/>
        <dbReference type="Rhea" id="RHEA-COMP:10123"/>
        <dbReference type="Rhea" id="RHEA-COMP:10124"/>
        <dbReference type="ChEBI" id="CHEBI:15377"/>
        <dbReference type="ChEBI" id="CHEBI:15378"/>
        <dbReference type="ChEBI" id="CHEBI:59871"/>
        <dbReference type="ChEBI" id="CHEBI:78442"/>
        <dbReference type="ChEBI" id="CHEBI:79333"/>
        <dbReference type="EC" id="3.1.1.96"/>
    </reaction>
</comment>
<comment type="subunit">
    <text evidence="1">Homodimer.</text>
</comment>
<comment type="subcellular location">
    <subcellularLocation>
        <location evidence="1">Cytoplasm</location>
    </subcellularLocation>
</comment>
<comment type="domain">
    <text evidence="1">A Gly-cisPro motif from one monomer fits into the active site of the other monomer to allow specific chiral rejection of L-amino acids.</text>
</comment>
<comment type="similarity">
    <text evidence="1">Belongs to the DTD family.</text>
</comment>
<reference key="1">
    <citation type="submission" date="2006-12" db="EMBL/GenBank/DDBJ databases">
        <title>Bifidobacterium adolescentis complete genome sequence.</title>
        <authorList>
            <person name="Suzuki T."/>
            <person name="Tsuda Y."/>
            <person name="Kanou N."/>
            <person name="Inoue T."/>
            <person name="Kumazaki K."/>
            <person name="Nagano S."/>
            <person name="Hirai S."/>
            <person name="Tanaka K."/>
            <person name="Watanabe K."/>
        </authorList>
    </citation>
    <scope>NUCLEOTIDE SEQUENCE [LARGE SCALE GENOMIC DNA]</scope>
    <source>
        <strain>ATCC 15703 / DSM 20083 / NCTC 11814 / E194a</strain>
    </source>
</reference>
<dbReference type="EC" id="3.1.1.96" evidence="1"/>
<dbReference type="EMBL" id="AP009256">
    <property type="protein sequence ID" value="BAF39749.1"/>
    <property type="molecule type" value="Genomic_DNA"/>
</dbReference>
<dbReference type="RefSeq" id="WP_011743332.1">
    <property type="nucleotide sequence ID" value="NC_008618.1"/>
</dbReference>
<dbReference type="SMR" id="A1A216"/>
<dbReference type="STRING" id="367928.BAD_0968"/>
<dbReference type="PaxDb" id="1680-BADO_1025"/>
<dbReference type="GeneID" id="4557149"/>
<dbReference type="KEGG" id="bad:BAD_0968"/>
<dbReference type="HOGENOM" id="CLU_076901_1_0_11"/>
<dbReference type="Proteomes" id="UP000008702">
    <property type="component" value="Chromosome"/>
</dbReference>
<dbReference type="GO" id="GO:0005737">
    <property type="term" value="C:cytoplasm"/>
    <property type="evidence" value="ECO:0007669"/>
    <property type="project" value="UniProtKB-SubCell"/>
</dbReference>
<dbReference type="GO" id="GO:0051500">
    <property type="term" value="F:D-tyrosyl-tRNA(Tyr) deacylase activity"/>
    <property type="evidence" value="ECO:0007669"/>
    <property type="project" value="TreeGrafter"/>
</dbReference>
<dbReference type="GO" id="GO:0106026">
    <property type="term" value="F:Gly-tRNA(Ala) deacylase activity"/>
    <property type="evidence" value="ECO:0007669"/>
    <property type="project" value="UniProtKB-UniRule"/>
</dbReference>
<dbReference type="GO" id="GO:0043908">
    <property type="term" value="F:Ser(Gly)-tRNA(Ala) hydrolase activity"/>
    <property type="evidence" value="ECO:0007669"/>
    <property type="project" value="UniProtKB-UniRule"/>
</dbReference>
<dbReference type="GO" id="GO:0000049">
    <property type="term" value="F:tRNA binding"/>
    <property type="evidence" value="ECO:0007669"/>
    <property type="project" value="UniProtKB-UniRule"/>
</dbReference>
<dbReference type="GO" id="GO:0019478">
    <property type="term" value="P:D-amino acid catabolic process"/>
    <property type="evidence" value="ECO:0007669"/>
    <property type="project" value="UniProtKB-UniRule"/>
</dbReference>
<dbReference type="FunFam" id="3.50.80.10:FF:000001">
    <property type="entry name" value="D-aminoacyl-tRNA deacylase"/>
    <property type="match status" value="1"/>
</dbReference>
<dbReference type="Gene3D" id="3.50.80.10">
    <property type="entry name" value="D-tyrosyl-tRNA(Tyr) deacylase"/>
    <property type="match status" value="1"/>
</dbReference>
<dbReference type="HAMAP" id="MF_00518">
    <property type="entry name" value="Deacylase_Dtd"/>
    <property type="match status" value="1"/>
</dbReference>
<dbReference type="InterPro" id="IPR003732">
    <property type="entry name" value="Daa-tRNA_deacyls_DTD"/>
</dbReference>
<dbReference type="InterPro" id="IPR023509">
    <property type="entry name" value="DTD-like_sf"/>
</dbReference>
<dbReference type="NCBIfam" id="TIGR00256">
    <property type="entry name" value="D-aminoacyl-tRNA deacylase"/>
    <property type="match status" value="1"/>
</dbReference>
<dbReference type="PANTHER" id="PTHR10472:SF5">
    <property type="entry name" value="D-AMINOACYL-TRNA DEACYLASE 1"/>
    <property type="match status" value="1"/>
</dbReference>
<dbReference type="PANTHER" id="PTHR10472">
    <property type="entry name" value="D-TYROSYL-TRNA TYR DEACYLASE"/>
    <property type="match status" value="1"/>
</dbReference>
<dbReference type="Pfam" id="PF02580">
    <property type="entry name" value="Tyr_Deacylase"/>
    <property type="match status" value="1"/>
</dbReference>
<dbReference type="SUPFAM" id="SSF69500">
    <property type="entry name" value="DTD-like"/>
    <property type="match status" value="1"/>
</dbReference>
<keyword id="KW-0963">Cytoplasm</keyword>
<keyword id="KW-0378">Hydrolase</keyword>
<keyword id="KW-1185">Reference proteome</keyword>
<keyword id="KW-0694">RNA-binding</keyword>
<keyword id="KW-0820">tRNA-binding</keyword>